<feature type="chain" id="PRO_1000137365" description="UPF0299 membrane protein YohJ">
    <location>
        <begin position="1"/>
        <end position="132"/>
    </location>
</feature>
<feature type="transmembrane region" description="Helical" evidence="1">
    <location>
        <begin position="8"/>
        <end position="28"/>
    </location>
</feature>
<feature type="transmembrane region" description="Helical" evidence="1">
    <location>
        <begin position="31"/>
        <end position="51"/>
    </location>
</feature>
<feature type="transmembrane region" description="Helical" evidence="1">
    <location>
        <begin position="63"/>
        <end position="83"/>
    </location>
</feature>
<feature type="transmembrane region" description="Helical" evidence="1">
    <location>
        <begin position="93"/>
        <end position="113"/>
    </location>
</feature>
<gene>
    <name evidence="1" type="primary">yohJ</name>
    <name type="ordered locus">EFER_2226</name>
</gene>
<sequence>MSKILNTIWQYVRAFVLIYACLYAGIFIASLLPVTIPGSIIGMLILFVLLALQILPAQWVNPGCYLLIRYMALLFVPIGVGVMQYFDLLRAQFGPVVVSCAISTLVVFLVVSWSSQLVHGERKVVGQKGSKE</sequence>
<name>YOHJ_ESCF3</name>
<protein>
    <recommendedName>
        <fullName evidence="1">UPF0299 membrane protein YohJ</fullName>
    </recommendedName>
</protein>
<reference key="1">
    <citation type="journal article" date="2009" name="PLoS Genet.">
        <title>Organised genome dynamics in the Escherichia coli species results in highly diverse adaptive paths.</title>
        <authorList>
            <person name="Touchon M."/>
            <person name="Hoede C."/>
            <person name="Tenaillon O."/>
            <person name="Barbe V."/>
            <person name="Baeriswyl S."/>
            <person name="Bidet P."/>
            <person name="Bingen E."/>
            <person name="Bonacorsi S."/>
            <person name="Bouchier C."/>
            <person name="Bouvet O."/>
            <person name="Calteau A."/>
            <person name="Chiapello H."/>
            <person name="Clermont O."/>
            <person name="Cruveiller S."/>
            <person name="Danchin A."/>
            <person name="Diard M."/>
            <person name="Dossat C."/>
            <person name="Karoui M.E."/>
            <person name="Frapy E."/>
            <person name="Garry L."/>
            <person name="Ghigo J.M."/>
            <person name="Gilles A.M."/>
            <person name="Johnson J."/>
            <person name="Le Bouguenec C."/>
            <person name="Lescat M."/>
            <person name="Mangenot S."/>
            <person name="Martinez-Jehanne V."/>
            <person name="Matic I."/>
            <person name="Nassif X."/>
            <person name="Oztas S."/>
            <person name="Petit M.A."/>
            <person name="Pichon C."/>
            <person name="Rouy Z."/>
            <person name="Ruf C.S."/>
            <person name="Schneider D."/>
            <person name="Tourret J."/>
            <person name="Vacherie B."/>
            <person name="Vallenet D."/>
            <person name="Medigue C."/>
            <person name="Rocha E.P.C."/>
            <person name="Denamur E."/>
        </authorList>
    </citation>
    <scope>NUCLEOTIDE SEQUENCE [LARGE SCALE GENOMIC DNA]</scope>
    <source>
        <strain>ATCC 35469 / DSM 13698 / BCRC 15582 / CCUG 18766 / IAM 14443 / JCM 21226 / LMG 7866 / NBRC 102419 / NCTC 12128 / CDC 0568-73</strain>
    </source>
</reference>
<evidence type="ECO:0000255" key="1">
    <source>
        <dbReference type="HAMAP-Rule" id="MF_01144"/>
    </source>
</evidence>
<keyword id="KW-0997">Cell inner membrane</keyword>
<keyword id="KW-1003">Cell membrane</keyword>
<keyword id="KW-0472">Membrane</keyword>
<keyword id="KW-0812">Transmembrane</keyword>
<keyword id="KW-1133">Transmembrane helix</keyword>
<accession>B7LVA1</accession>
<comment type="subcellular location">
    <subcellularLocation>
        <location evidence="1">Cell inner membrane</location>
        <topology evidence="1">Multi-pass membrane protein</topology>
    </subcellularLocation>
</comment>
<comment type="similarity">
    <text evidence="1">Belongs to the UPF0299 family.</text>
</comment>
<organism>
    <name type="scientific">Escherichia fergusonii (strain ATCC 35469 / DSM 13698 / CCUG 18766 / IAM 14443 / JCM 21226 / LMG 7866 / NBRC 102419 / NCTC 12128 / CDC 0568-73)</name>
    <dbReference type="NCBI Taxonomy" id="585054"/>
    <lineage>
        <taxon>Bacteria</taxon>
        <taxon>Pseudomonadati</taxon>
        <taxon>Pseudomonadota</taxon>
        <taxon>Gammaproteobacteria</taxon>
        <taxon>Enterobacterales</taxon>
        <taxon>Enterobacteriaceae</taxon>
        <taxon>Escherichia</taxon>
    </lineage>
</organism>
<proteinExistence type="inferred from homology"/>
<dbReference type="EMBL" id="CU928158">
    <property type="protein sequence ID" value="CAQ89728.1"/>
    <property type="molecule type" value="Genomic_DNA"/>
</dbReference>
<dbReference type="RefSeq" id="WP_002431444.1">
    <property type="nucleotide sequence ID" value="NC_011740.1"/>
</dbReference>
<dbReference type="SMR" id="B7LVA1"/>
<dbReference type="KEGG" id="efe:EFER_2226"/>
<dbReference type="HOGENOM" id="CLU_113736_1_1_6"/>
<dbReference type="OrthoDB" id="385012at2"/>
<dbReference type="Proteomes" id="UP000000745">
    <property type="component" value="Chromosome"/>
</dbReference>
<dbReference type="GO" id="GO:0005886">
    <property type="term" value="C:plasma membrane"/>
    <property type="evidence" value="ECO:0007669"/>
    <property type="project" value="UniProtKB-SubCell"/>
</dbReference>
<dbReference type="HAMAP" id="MF_01144">
    <property type="entry name" value="UPF0299"/>
    <property type="match status" value="1"/>
</dbReference>
<dbReference type="InterPro" id="IPR005538">
    <property type="entry name" value="LrgA/CidA"/>
</dbReference>
<dbReference type="InterPro" id="IPR022957">
    <property type="entry name" value="Uncharacterised_UPF0299"/>
</dbReference>
<dbReference type="NCBIfam" id="NF002494">
    <property type="entry name" value="PRK01821.1"/>
    <property type="match status" value="1"/>
</dbReference>
<dbReference type="PANTHER" id="PTHR33931">
    <property type="entry name" value="HOLIN-LIKE PROTEIN CIDA-RELATED"/>
    <property type="match status" value="1"/>
</dbReference>
<dbReference type="PANTHER" id="PTHR33931:SF5">
    <property type="entry name" value="UPF0299 MEMBRANE PROTEIN YOHJ"/>
    <property type="match status" value="1"/>
</dbReference>
<dbReference type="Pfam" id="PF03788">
    <property type="entry name" value="LrgA"/>
    <property type="match status" value="1"/>
</dbReference>